<comment type="function">
    <text evidence="1">F(1)F(0) ATP synthase produces ATP from ADP in the presence of a proton or sodium gradient. F-type ATPases consist of two structural domains, F(1) containing the extramembraneous catalytic core and F(0) containing the membrane proton channel, linked together by a central stalk and a peripheral stalk. During catalysis, ATP synthesis in the catalytic domain of F(1) is coupled via a rotary mechanism of the central stalk subunits to proton translocation.</text>
</comment>
<comment type="function">
    <text evidence="1">Key component of the F(0) channel; it plays a direct role in translocation across the membrane. A homomeric c-ring of between 10-14 subunits forms the central stalk rotor element with the F(1) delta and epsilon subunits.</text>
</comment>
<comment type="subunit">
    <text evidence="1">F-type ATPases have 2 components, F(1) - the catalytic core - and F(0) - the membrane proton channel. F(1) has five subunits: alpha(3), beta(3), gamma(1), delta(1), epsilon(1). F(0) has four main subunits: a(1), b(1), b'(1) and c(10-14). The alpha and beta chains form an alternating ring which encloses part of the gamma chain. F(1) is attached to F(0) by a central stalk formed by the gamma and epsilon chains, while a peripheral stalk is formed by the delta, b and b' chains.</text>
</comment>
<comment type="subcellular location">
    <subcellularLocation>
        <location evidence="1">Cell membrane</location>
        <topology evidence="1">Multi-pass membrane protein</topology>
    </subcellularLocation>
</comment>
<comment type="similarity">
    <text evidence="1">Belongs to the ATPase C chain family.</text>
</comment>
<name>ATPL_CHLAD</name>
<dbReference type="EMBL" id="CP001337">
    <property type="protein sequence ID" value="ACL23908.1"/>
    <property type="molecule type" value="Genomic_DNA"/>
</dbReference>
<dbReference type="RefSeq" id="WP_012258898.1">
    <property type="nucleotide sequence ID" value="NC_011831.1"/>
</dbReference>
<dbReference type="SMR" id="B8G6H1"/>
<dbReference type="STRING" id="326427.Cagg_0990"/>
<dbReference type="KEGG" id="cag:Cagg_0990"/>
<dbReference type="eggNOG" id="COG0636">
    <property type="taxonomic scope" value="Bacteria"/>
</dbReference>
<dbReference type="HOGENOM" id="CLU_148047_5_0_0"/>
<dbReference type="OrthoDB" id="166993at2"/>
<dbReference type="Proteomes" id="UP000002508">
    <property type="component" value="Chromosome"/>
</dbReference>
<dbReference type="GO" id="GO:0005886">
    <property type="term" value="C:plasma membrane"/>
    <property type="evidence" value="ECO:0007669"/>
    <property type="project" value="UniProtKB-SubCell"/>
</dbReference>
<dbReference type="GO" id="GO:0045259">
    <property type="term" value="C:proton-transporting ATP synthase complex"/>
    <property type="evidence" value="ECO:0007669"/>
    <property type="project" value="UniProtKB-KW"/>
</dbReference>
<dbReference type="GO" id="GO:0033177">
    <property type="term" value="C:proton-transporting two-sector ATPase complex, proton-transporting domain"/>
    <property type="evidence" value="ECO:0007669"/>
    <property type="project" value="InterPro"/>
</dbReference>
<dbReference type="GO" id="GO:0008289">
    <property type="term" value="F:lipid binding"/>
    <property type="evidence" value="ECO:0007669"/>
    <property type="project" value="UniProtKB-KW"/>
</dbReference>
<dbReference type="GO" id="GO:0046933">
    <property type="term" value="F:proton-transporting ATP synthase activity, rotational mechanism"/>
    <property type="evidence" value="ECO:0007669"/>
    <property type="project" value="UniProtKB-UniRule"/>
</dbReference>
<dbReference type="CDD" id="cd18121">
    <property type="entry name" value="ATP-synt_Fo_c"/>
    <property type="match status" value="1"/>
</dbReference>
<dbReference type="FunFam" id="1.20.20.10:FF:000004">
    <property type="entry name" value="ATP synthase subunit c"/>
    <property type="match status" value="1"/>
</dbReference>
<dbReference type="Gene3D" id="1.20.20.10">
    <property type="entry name" value="F1F0 ATP synthase subunit C"/>
    <property type="match status" value="1"/>
</dbReference>
<dbReference type="HAMAP" id="MF_01396">
    <property type="entry name" value="ATP_synth_c_bact"/>
    <property type="match status" value="1"/>
</dbReference>
<dbReference type="InterPro" id="IPR005953">
    <property type="entry name" value="ATP_synth_csu_bac/chlpt"/>
</dbReference>
<dbReference type="InterPro" id="IPR000454">
    <property type="entry name" value="ATP_synth_F0_csu"/>
</dbReference>
<dbReference type="InterPro" id="IPR020537">
    <property type="entry name" value="ATP_synth_F0_csu_DDCD_BS"/>
</dbReference>
<dbReference type="InterPro" id="IPR038662">
    <property type="entry name" value="ATP_synth_F0_csu_sf"/>
</dbReference>
<dbReference type="InterPro" id="IPR002379">
    <property type="entry name" value="ATPase_proteolipid_c-like_dom"/>
</dbReference>
<dbReference type="InterPro" id="IPR035921">
    <property type="entry name" value="F/V-ATP_Csub_sf"/>
</dbReference>
<dbReference type="NCBIfam" id="TIGR01260">
    <property type="entry name" value="ATP_synt_c"/>
    <property type="match status" value="1"/>
</dbReference>
<dbReference type="PANTHER" id="PTHR10031">
    <property type="entry name" value="ATP SYNTHASE LIPID-BINDING PROTEIN, MITOCHONDRIAL"/>
    <property type="match status" value="1"/>
</dbReference>
<dbReference type="PANTHER" id="PTHR10031:SF0">
    <property type="entry name" value="ATPASE PROTEIN 9"/>
    <property type="match status" value="1"/>
</dbReference>
<dbReference type="Pfam" id="PF00137">
    <property type="entry name" value="ATP-synt_C"/>
    <property type="match status" value="1"/>
</dbReference>
<dbReference type="PRINTS" id="PR00124">
    <property type="entry name" value="ATPASEC"/>
</dbReference>
<dbReference type="SUPFAM" id="SSF81333">
    <property type="entry name" value="F1F0 ATP synthase subunit C"/>
    <property type="match status" value="1"/>
</dbReference>
<dbReference type="PROSITE" id="PS00605">
    <property type="entry name" value="ATPASE_C"/>
    <property type="match status" value="1"/>
</dbReference>
<accession>B8G6H1</accession>
<proteinExistence type="inferred from homology"/>
<reference key="1">
    <citation type="submission" date="2008-12" db="EMBL/GenBank/DDBJ databases">
        <title>Complete sequence of Chloroflexus aggregans DSM 9485.</title>
        <authorList>
            <consortium name="US DOE Joint Genome Institute"/>
            <person name="Lucas S."/>
            <person name="Copeland A."/>
            <person name="Lapidus A."/>
            <person name="Glavina del Rio T."/>
            <person name="Dalin E."/>
            <person name="Tice H."/>
            <person name="Pitluck S."/>
            <person name="Foster B."/>
            <person name="Larimer F."/>
            <person name="Land M."/>
            <person name="Hauser L."/>
            <person name="Kyrpides N."/>
            <person name="Mikhailova N."/>
            <person name="Bryant D.A."/>
            <person name="Richardson P."/>
        </authorList>
    </citation>
    <scope>NUCLEOTIDE SEQUENCE [LARGE SCALE GENOMIC DNA]</scope>
    <source>
        <strain>MD-66 / DSM 9485</strain>
    </source>
</reference>
<protein>
    <recommendedName>
        <fullName evidence="1">ATP synthase subunit c</fullName>
    </recommendedName>
    <alternativeName>
        <fullName evidence="1">ATP synthase F(0) sector subunit c</fullName>
    </alternativeName>
    <alternativeName>
        <fullName evidence="1">F-type ATPase subunit c</fullName>
        <shortName evidence="1">F-ATPase subunit c</shortName>
    </alternativeName>
    <alternativeName>
        <fullName evidence="1">Lipid-binding protein</fullName>
    </alternativeName>
</protein>
<feature type="chain" id="PRO_1000184346" description="ATP synthase subunit c">
    <location>
        <begin position="1"/>
        <end position="76"/>
    </location>
</feature>
<feature type="transmembrane region" description="Helical" evidence="1">
    <location>
        <begin position="7"/>
        <end position="27"/>
    </location>
</feature>
<feature type="transmembrane region" description="Helical" evidence="1">
    <location>
        <begin position="50"/>
        <end position="70"/>
    </location>
</feature>
<feature type="site" description="Reversibly protonated during proton transport" evidence="1">
    <location>
        <position position="57"/>
    </location>
</feature>
<sequence length="76" mass="7686">MEGLNLVATALAVGLGAIGPGVGIGIIVSGAVQAIGRNPEIENRVVTYMFIGIAFTEALAIFGLVIAFLIGFGVLQ</sequence>
<gene>
    <name evidence="1" type="primary">atpE</name>
    <name type="ordered locus">Cagg_0990</name>
</gene>
<evidence type="ECO:0000255" key="1">
    <source>
        <dbReference type="HAMAP-Rule" id="MF_01396"/>
    </source>
</evidence>
<organism>
    <name type="scientific">Chloroflexus aggregans (strain MD-66 / DSM 9485)</name>
    <dbReference type="NCBI Taxonomy" id="326427"/>
    <lineage>
        <taxon>Bacteria</taxon>
        <taxon>Bacillati</taxon>
        <taxon>Chloroflexota</taxon>
        <taxon>Chloroflexia</taxon>
        <taxon>Chloroflexales</taxon>
        <taxon>Chloroflexineae</taxon>
        <taxon>Chloroflexaceae</taxon>
        <taxon>Chloroflexus</taxon>
    </lineage>
</organism>
<keyword id="KW-0066">ATP synthesis</keyword>
<keyword id="KW-1003">Cell membrane</keyword>
<keyword id="KW-0138">CF(0)</keyword>
<keyword id="KW-0375">Hydrogen ion transport</keyword>
<keyword id="KW-0406">Ion transport</keyword>
<keyword id="KW-0446">Lipid-binding</keyword>
<keyword id="KW-0472">Membrane</keyword>
<keyword id="KW-0812">Transmembrane</keyword>
<keyword id="KW-1133">Transmembrane helix</keyword>
<keyword id="KW-0813">Transport</keyword>